<reference evidence="3" key="1">
    <citation type="journal article" date="2005" name="Biochem. Biophys. Res. Commun.">
        <title>Molecular mechanism of high altitude respiration: primary structure of a minor hemoglobin component from Tufted duck (Aythya fuligula, Anseriformes).</title>
        <authorList>
            <person name="Lutfullah G."/>
            <person name="Ali S.A."/>
            <person name="Abbasi A."/>
        </authorList>
    </citation>
    <scope>PROTEIN SEQUENCE</scope>
    <scope>MASS SPECTROMETRY</scope>
    <source>
        <tissue evidence="2">Erythrocyte</tissue>
    </source>
</reference>
<dbReference type="SMR" id="P84791"/>
<dbReference type="FunCoup" id="P84791">
    <property type="interactions" value="52"/>
</dbReference>
<dbReference type="InParanoid" id="P84791"/>
<dbReference type="Proteomes" id="UP000504639">
    <property type="component" value="Unplaced"/>
</dbReference>
<dbReference type="GO" id="GO:0072562">
    <property type="term" value="C:blood microparticle"/>
    <property type="evidence" value="ECO:0007669"/>
    <property type="project" value="TreeGrafter"/>
</dbReference>
<dbReference type="GO" id="GO:0031838">
    <property type="term" value="C:haptoglobin-hemoglobin complex"/>
    <property type="evidence" value="ECO:0007669"/>
    <property type="project" value="TreeGrafter"/>
</dbReference>
<dbReference type="GO" id="GO:0005833">
    <property type="term" value="C:hemoglobin complex"/>
    <property type="evidence" value="ECO:0000314"/>
    <property type="project" value="UniProtKB"/>
</dbReference>
<dbReference type="GO" id="GO:0031720">
    <property type="term" value="F:haptoglobin binding"/>
    <property type="evidence" value="ECO:0007669"/>
    <property type="project" value="TreeGrafter"/>
</dbReference>
<dbReference type="GO" id="GO:0020037">
    <property type="term" value="F:heme binding"/>
    <property type="evidence" value="ECO:0007669"/>
    <property type="project" value="InterPro"/>
</dbReference>
<dbReference type="GO" id="GO:0005506">
    <property type="term" value="F:iron ion binding"/>
    <property type="evidence" value="ECO:0007669"/>
    <property type="project" value="InterPro"/>
</dbReference>
<dbReference type="GO" id="GO:0043177">
    <property type="term" value="F:organic acid binding"/>
    <property type="evidence" value="ECO:0007669"/>
    <property type="project" value="TreeGrafter"/>
</dbReference>
<dbReference type="GO" id="GO:0019825">
    <property type="term" value="F:oxygen binding"/>
    <property type="evidence" value="ECO:0000314"/>
    <property type="project" value="UniProtKB"/>
</dbReference>
<dbReference type="GO" id="GO:0005344">
    <property type="term" value="F:oxygen carrier activity"/>
    <property type="evidence" value="ECO:0007669"/>
    <property type="project" value="UniProtKB-KW"/>
</dbReference>
<dbReference type="GO" id="GO:0004601">
    <property type="term" value="F:peroxidase activity"/>
    <property type="evidence" value="ECO:0007669"/>
    <property type="project" value="TreeGrafter"/>
</dbReference>
<dbReference type="GO" id="GO:0042744">
    <property type="term" value="P:hydrogen peroxide catabolic process"/>
    <property type="evidence" value="ECO:0007669"/>
    <property type="project" value="TreeGrafter"/>
</dbReference>
<dbReference type="GO" id="GO:0015671">
    <property type="term" value="P:oxygen transport"/>
    <property type="evidence" value="ECO:0000314"/>
    <property type="project" value="UniProtKB"/>
</dbReference>
<dbReference type="CDD" id="cd08927">
    <property type="entry name" value="Hb-alpha-like"/>
    <property type="match status" value="1"/>
</dbReference>
<dbReference type="FunFam" id="1.10.490.10:FF:000002">
    <property type="entry name" value="Hemoglobin subunit alpha"/>
    <property type="match status" value="1"/>
</dbReference>
<dbReference type="Gene3D" id="1.10.490.10">
    <property type="entry name" value="Globins"/>
    <property type="match status" value="1"/>
</dbReference>
<dbReference type="InterPro" id="IPR000971">
    <property type="entry name" value="Globin"/>
</dbReference>
<dbReference type="InterPro" id="IPR009050">
    <property type="entry name" value="Globin-like_sf"/>
</dbReference>
<dbReference type="InterPro" id="IPR012292">
    <property type="entry name" value="Globin/Proto"/>
</dbReference>
<dbReference type="InterPro" id="IPR002338">
    <property type="entry name" value="Hemoglobin_a-typ"/>
</dbReference>
<dbReference type="InterPro" id="IPR050056">
    <property type="entry name" value="Hemoglobin_oxygen_transport"/>
</dbReference>
<dbReference type="InterPro" id="IPR002340">
    <property type="entry name" value="Hemoglobin_zeta"/>
</dbReference>
<dbReference type="PANTHER" id="PTHR11442">
    <property type="entry name" value="HEMOGLOBIN FAMILY MEMBER"/>
    <property type="match status" value="1"/>
</dbReference>
<dbReference type="PANTHER" id="PTHR11442:SF41">
    <property type="entry name" value="HEMOGLOBIN SUBUNIT ZETA"/>
    <property type="match status" value="1"/>
</dbReference>
<dbReference type="Pfam" id="PF00042">
    <property type="entry name" value="Globin"/>
    <property type="match status" value="1"/>
</dbReference>
<dbReference type="PRINTS" id="PR00612">
    <property type="entry name" value="ALPHAHAEM"/>
</dbReference>
<dbReference type="PRINTS" id="PR00816">
    <property type="entry name" value="ZETAHAEM"/>
</dbReference>
<dbReference type="SUPFAM" id="SSF46458">
    <property type="entry name" value="Globin-like"/>
    <property type="match status" value="1"/>
</dbReference>
<dbReference type="PROSITE" id="PS01033">
    <property type="entry name" value="GLOBIN"/>
    <property type="match status" value="1"/>
</dbReference>
<sequence>MLTAEDKKLITQLWEKVAGHQDDFGNEALQRMFVTYPQTKTYFPHFDLHPGSEQVRGHGKKVAAALGNAVKSLDNISQALSELSNLHAYNLRVDPVNFKLLAQCFQVVLAAHLGKDYTPDMHAAFDKFLSAVAAVLAEKYR</sequence>
<gene>
    <name type="primary">HBAD</name>
</gene>
<keyword id="KW-0903">Direct protein sequencing</keyword>
<keyword id="KW-0349">Heme</keyword>
<keyword id="KW-0408">Iron</keyword>
<keyword id="KW-0479">Metal-binding</keyword>
<keyword id="KW-0561">Oxygen transport</keyword>
<keyword id="KW-1185">Reference proteome</keyword>
<keyword id="KW-0813">Transport</keyword>
<proteinExistence type="evidence at protein level"/>
<comment type="function">
    <text evidence="3">Involved in oxygen transport from the lung to the various peripheral tissues.</text>
</comment>
<comment type="subunit">
    <text evidence="3">Heterotetramer of two alpha-D chains and two beta chains.</text>
</comment>
<comment type="tissue specificity">
    <text evidence="3">Red blood cells.</text>
</comment>
<comment type="developmental stage">
    <text evidence="3">In birds, the alpha-D chain occurs in a minor hemoglobin component, called hemoglobin d, which is expressed in late embryonic and adult life.</text>
</comment>
<comment type="mass spectrometry"/>
<comment type="similarity">
    <text evidence="1">Belongs to the globin family.</text>
</comment>
<feature type="chain" id="PRO_0000227532" description="Hemoglobin subunit alpha-D">
    <location>
        <begin position="1"/>
        <end position="141"/>
    </location>
</feature>
<feature type="domain" description="Globin" evidence="1">
    <location>
        <begin position="1"/>
        <end position="141"/>
    </location>
</feature>
<feature type="binding site" description="distal binding residue">
    <location>
        <position position="58"/>
    </location>
    <ligand>
        <name>heme b</name>
        <dbReference type="ChEBI" id="CHEBI:60344"/>
    </ligand>
    <ligandPart>
        <name>Fe</name>
        <dbReference type="ChEBI" id="CHEBI:18248"/>
    </ligandPart>
</feature>
<feature type="binding site" description="proximal binding residue">
    <location>
        <position position="87"/>
    </location>
    <ligand>
        <name>heme b</name>
        <dbReference type="ChEBI" id="CHEBI:60344"/>
    </ligand>
    <ligandPart>
        <name>Fe</name>
        <dbReference type="ChEBI" id="CHEBI:18248"/>
    </ligandPart>
</feature>
<organism>
    <name type="scientific">Aythya fuligula</name>
    <name type="common">Tufted duck</name>
    <name type="synonym">Anas fuligula</name>
    <dbReference type="NCBI Taxonomy" id="219594"/>
    <lineage>
        <taxon>Eukaryota</taxon>
        <taxon>Metazoa</taxon>
        <taxon>Chordata</taxon>
        <taxon>Craniata</taxon>
        <taxon>Vertebrata</taxon>
        <taxon>Euteleostomi</taxon>
        <taxon>Archelosauria</taxon>
        <taxon>Archosauria</taxon>
        <taxon>Dinosauria</taxon>
        <taxon>Saurischia</taxon>
        <taxon>Theropoda</taxon>
        <taxon>Coelurosauria</taxon>
        <taxon>Aves</taxon>
        <taxon>Neognathae</taxon>
        <taxon>Galloanserae</taxon>
        <taxon>Anseriformes</taxon>
        <taxon>Anatidae</taxon>
        <taxon>Aythyinae</taxon>
        <taxon>Aythya</taxon>
    </lineage>
</organism>
<accession>P84791</accession>
<evidence type="ECO:0000255" key="1">
    <source>
        <dbReference type="PROSITE-ProRule" id="PRU00238"/>
    </source>
</evidence>
<evidence type="ECO:0000269" key="2">
    <source>
    </source>
</evidence>
<evidence type="ECO:0000305" key="3"/>
<protein>
    <recommendedName>
        <fullName>Hemoglobin subunit alpha-D</fullName>
    </recommendedName>
    <alternativeName>
        <fullName>Alpha-D-globin</fullName>
    </alternativeName>
    <alternativeName>
        <fullName>Hemoglobin alpha-D chain</fullName>
    </alternativeName>
</protein>
<name>HBAD_AYTFU</name>